<evidence type="ECO:0000255" key="1">
    <source>
        <dbReference type="HAMAP-Rule" id="MF_00815"/>
    </source>
</evidence>
<organism>
    <name type="scientific">Rhizobium etli (strain CIAT 652)</name>
    <dbReference type="NCBI Taxonomy" id="491916"/>
    <lineage>
        <taxon>Bacteria</taxon>
        <taxon>Pseudomonadati</taxon>
        <taxon>Pseudomonadota</taxon>
        <taxon>Alphaproteobacteria</taxon>
        <taxon>Hyphomicrobiales</taxon>
        <taxon>Rhizobiaceae</taxon>
        <taxon>Rhizobium/Agrobacterium group</taxon>
        <taxon>Rhizobium</taxon>
    </lineage>
</organism>
<name>ATPG_RHIE6</name>
<keyword id="KW-0066">ATP synthesis</keyword>
<keyword id="KW-0997">Cell inner membrane</keyword>
<keyword id="KW-1003">Cell membrane</keyword>
<keyword id="KW-0139">CF(1)</keyword>
<keyword id="KW-0375">Hydrogen ion transport</keyword>
<keyword id="KW-0406">Ion transport</keyword>
<keyword id="KW-0472">Membrane</keyword>
<keyword id="KW-0813">Transport</keyword>
<feature type="chain" id="PRO_1000134194" description="ATP synthase gamma chain">
    <location>
        <begin position="1"/>
        <end position="294"/>
    </location>
</feature>
<reference key="1">
    <citation type="journal article" date="2010" name="Appl. Environ. Microbiol.">
        <title>Conserved symbiotic plasmid DNA sequences in the multireplicon pangenomic structure of Rhizobium etli.</title>
        <authorList>
            <person name="Gonzalez V."/>
            <person name="Acosta J.L."/>
            <person name="Santamaria R.I."/>
            <person name="Bustos P."/>
            <person name="Fernandez J.L."/>
            <person name="Hernandez Gonzalez I.L."/>
            <person name="Diaz R."/>
            <person name="Flores M."/>
            <person name="Palacios R."/>
            <person name="Mora J."/>
            <person name="Davila G."/>
        </authorList>
    </citation>
    <scope>NUCLEOTIDE SEQUENCE [LARGE SCALE GENOMIC DNA]</scope>
    <source>
        <strain>CIAT 652</strain>
    </source>
</reference>
<proteinExistence type="inferred from homology"/>
<protein>
    <recommendedName>
        <fullName evidence="1">ATP synthase gamma chain</fullName>
    </recommendedName>
    <alternativeName>
        <fullName evidence="1">ATP synthase F1 sector gamma subunit</fullName>
    </alternativeName>
    <alternativeName>
        <fullName evidence="1">F-ATPase gamma subunit</fullName>
    </alternativeName>
</protein>
<accession>B3PQ69</accession>
<comment type="function">
    <text evidence="1">Produces ATP from ADP in the presence of a proton gradient across the membrane. The gamma chain is believed to be important in regulating ATPase activity and the flow of protons through the CF(0) complex.</text>
</comment>
<comment type="subunit">
    <text evidence="1">F-type ATPases have 2 components, CF(1) - the catalytic core - and CF(0) - the membrane proton channel. CF(1) has five subunits: alpha(3), beta(3), gamma(1), delta(1), epsilon(1). CF(0) has three main subunits: a, b and c.</text>
</comment>
<comment type="subcellular location">
    <subcellularLocation>
        <location evidence="1">Cell inner membrane</location>
        <topology evidence="1">Peripheral membrane protein</topology>
    </subcellularLocation>
</comment>
<comment type="similarity">
    <text evidence="1">Belongs to the ATPase gamma chain family.</text>
</comment>
<gene>
    <name evidence="1" type="primary">atpG</name>
    <name type="ordered locus">RHECIAT_CH0004152</name>
</gene>
<dbReference type="EMBL" id="CP001074">
    <property type="protein sequence ID" value="ACE93081.1"/>
    <property type="molecule type" value="Genomic_DNA"/>
</dbReference>
<dbReference type="SMR" id="B3PQ69"/>
<dbReference type="KEGG" id="rec:RHECIAT_CH0004152"/>
<dbReference type="eggNOG" id="COG0224">
    <property type="taxonomic scope" value="Bacteria"/>
</dbReference>
<dbReference type="HOGENOM" id="CLU_050669_0_1_5"/>
<dbReference type="Proteomes" id="UP000008817">
    <property type="component" value="Chromosome"/>
</dbReference>
<dbReference type="GO" id="GO:0005886">
    <property type="term" value="C:plasma membrane"/>
    <property type="evidence" value="ECO:0007669"/>
    <property type="project" value="UniProtKB-SubCell"/>
</dbReference>
<dbReference type="GO" id="GO:0045259">
    <property type="term" value="C:proton-transporting ATP synthase complex"/>
    <property type="evidence" value="ECO:0007669"/>
    <property type="project" value="UniProtKB-KW"/>
</dbReference>
<dbReference type="GO" id="GO:0005524">
    <property type="term" value="F:ATP binding"/>
    <property type="evidence" value="ECO:0007669"/>
    <property type="project" value="UniProtKB-UniRule"/>
</dbReference>
<dbReference type="GO" id="GO:0046933">
    <property type="term" value="F:proton-transporting ATP synthase activity, rotational mechanism"/>
    <property type="evidence" value="ECO:0007669"/>
    <property type="project" value="UniProtKB-UniRule"/>
</dbReference>
<dbReference type="GO" id="GO:0042777">
    <property type="term" value="P:proton motive force-driven plasma membrane ATP synthesis"/>
    <property type="evidence" value="ECO:0007669"/>
    <property type="project" value="UniProtKB-UniRule"/>
</dbReference>
<dbReference type="CDD" id="cd12151">
    <property type="entry name" value="F1-ATPase_gamma"/>
    <property type="match status" value="1"/>
</dbReference>
<dbReference type="FunFam" id="1.10.287.80:FF:000001">
    <property type="entry name" value="ATP synthase gamma chain"/>
    <property type="match status" value="1"/>
</dbReference>
<dbReference type="FunFam" id="1.10.287.80:FF:000003">
    <property type="entry name" value="ATP synthase gamma chain, chloroplastic"/>
    <property type="match status" value="1"/>
</dbReference>
<dbReference type="Gene3D" id="3.40.1380.10">
    <property type="match status" value="1"/>
</dbReference>
<dbReference type="Gene3D" id="1.10.287.80">
    <property type="entry name" value="ATP synthase, gamma subunit, helix hairpin domain"/>
    <property type="match status" value="1"/>
</dbReference>
<dbReference type="HAMAP" id="MF_00815">
    <property type="entry name" value="ATP_synth_gamma_bact"/>
    <property type="match status" value="1"/>
</dbReference>
<dbReference type="InterPro" id="IPR035968">
    <property type="entry name" value="ATP_synth_F1_ATPase_gsu"/>
</dbReference>
<dbReference type="InterPro" id="IPR000131">
    <property type="entry name" value="ATP_synth_F1_gsu"/>
</dbReference>
<dbReference type="InterPro" id="IPR023632">
    <property type="entry name" value="ATP_synth_F1_gsu_CS"/>
</dbReference>
<dbReference type="NCBIfam" id="TIGR01146">
    <property type="entry name" value="ATPsyn_F1gamma"/>
    <property type="match status" value="1"/>
</dbReference>
<dbReference type="NCBIfam" id="NF004146">
    <property type="entry name" value="PRK05621.1-4"/>
    <property type="match status" value="1"/>
</dbReference>
<dbReference type="PANTHER" id="PTHR11693">
    <property type="entry name" value="ATP SYNTHASE GAMMA CHAIN"/>
    <property type="match status" value="1"/>
</dbReference>
<dbReference type="PANTHER" id="PTHR11693:SF22">
    <property type="entry name" value="ATP SYNTHASE SUBUNIT GAMMA, MITOCHONDRIAL"/>
    <property type="match status" value="1"/>
</dbReference>
<dbReference type="Pfam" id="PF00231">
    <property type="entry name" value="ATP-synt"/>
    <property type="match status" value="1"/>
</dbReference>
<dbReference type="PIRSF" id="PIRSF039089">
    <property type="entry name" value="ATP_synthase_gamma"/>
    <property type="match status" value="1"/>
</dbReference>
<dbReference type="PRINTS" id="PR00126">
    <property type="entry name" value="ATPASEGAMMA"/>
</dbReference>
<dbReference type="SUPFAM" id="SSF52943">
    <property type="entry name" value="ATP synthase (F1-ATPase), gamma subunit"/>
    <property type="match status" value="1"/>
</dbReference>
<dbReference type="PROSITE" id="PS00153">
    <property type="entry name" value="ATPASE_GAMMA"/>
    <property type="match status" value="1"/>
</dbReference>
<sequence>MPSLKDLKNRIASVKATQKITKAMKMVAAAKLRRAQEAAEAARPYSQRMNTVLANIAKAVTDADGAPVLMTGTGKDQVHLLVVCTAERGLCGGFNSQIARFARDHVRKLVAEGKTVKIFTVGKKGYDILRREFASLIVERKELREVKKIGFENADQIGKRIIEMFEAGEFDVCTLFYSEFKSVISQVPTAQQLIPAKAPEAVAEDADHAGAVYEYEPDPAAILDDLIPRNISVQIFRALLENVAGEMGAKMSAMDNATRNAGEMINKLTLSYNRQRQAQITKELIEIISGAEAL</sequence>